<dbReference type="EC" id="3.4.11.-" evidence="1"/>
<dbReference type="EMBL" id="AL123456">
    <property type="protein sequence ID" value="CCP44091.1"/>
    <property type="molecule type" value="Genomic_DNA"/>
</dbReference>
<dbReference type="PIR" id="A70771">
    <property type="entry name" value="A70771"/>
</dbReference>
<dbReference type="RefSeq" id="NP_215849.1">
    <property type="nucleotide sequence ID" value="NC_000962.3"/>
</dbReference>
<dbReference type="RefSeq" id="WP_003406908.1">
    <property type="nucleotide sequence ID" value="NZ_NVQJ01000031.1"/>
</dbReference>
<dbReference type="SMR" id="P9WM23"/>
<dbReference type="STRING" id="83332.Rv1333"/>
<dbReference type="PaxDb" id="83332-Rv1333"/>
<dbReference type="DNASU" id="886882"/>
<dbReference type="GeneID" id="886882"/>
<dbReference type="KEGG" id="mtu:Rv1333"/>
<dbReference type="KEGG" id="mtv:RVBD_1333"/>
<dbReference type="TubercuList" id="Rv1333"/>
<dbReference type="eggNOG" id="COG3191">
    <property type="taxonomic scope" value="Bacteria"/>
</dbReference>
<dbReference type="InParanoid" id="P9WM23"/>
<dbReference type="OrthoDB" id="9808347at2"/>
<dbReference type="PhylomeDB" id="P9WM23"/>
<dbReference type="Proteomes" id="UP000001584">
    <property type="component" value="Chromosome"/>
</dbReference>
<dbReference type="GO" id="GO:0005886">
    <property type="term" value="C:plasma membrane"/>
    <property type="evidence" value="ECO:0007669"/>
    <property type="project" value="UniProtKB-SubCell"/>
</dbReference>
<dbReference type="GO" id="GO:0004177">
    <property type="term" value="F:aminopeptidase activity"/>
    <property type="evidence" value="ECO:0000318"/>
    <property type="project" value="GO_Central"/>
</dbReference>
<dbReference type="GO" id="GO:0006508">
    <property type="term" value="P:proteolysis"/>
    <property type="evidence" value="ECO:0007669"/>
    <property type="project" value="UniProtKB-KW"/>
</dbReference>
<dbReference type="CDD" id="cd02252">
    <property type="entry name" value="nylC_like"/>
    <property type="match status" value="1"/>
</dbReference>
<dbReference type="FunFam" id="3.60.70.12:FF:000003">
    <property type="entry name" value="Putative cysteine transferase"/>
    <property type="match status" value="1"/>
</dbReference>
<dbReference type="Gene3D" id="3.60.70.12">
    <property type="entry name" value="L-amino peptidase D-ALA esterase/amidase"/>
    <property type="match status" value="1"/>
</dbReference>
<dbReference type="InterPro" id="IPR016117">
    <property type="entry name" value="ArgJ-like_dom_sf"/>
</dbReference>
<dbReference type="InterPro" id="IPR005321">
    <property type="entry name" value="Peptidase_S58_DmpA"/>
</dbReference>
<dbReference type="PANTHER" id="PTHR36512:SF3">
    <property type="entry name" value="BLR5678 PROTEIN"/>
    <property type="match status" value="1"/>
</dbReference>
<dbReference type="PANTHER" id="PTHR36512">
    <property type="entry name" value="D-AMINOPEPTIDASE"/>
    <property type="match status" value="1"/>
</dbReference>
<dbReference type="Pfam" id="PF03576">
    <property type="entry name" value="Peptidase_S58"/>
    <property type="match status" value="1"/>
</dbReference>
<dbReference type="SUPFAM" id="SSF56266">
    <property type="entry name" value="DmpA/ArgJ-like"/>
    <property type="match status" value="1"/>
</dbReference>
<name>Y1333_MYCTU</name>
<keyword id="KW-0031">Aminopeptidase</keyword>
<keyword id="KW-1003">Cell membrane</keyword>
<keyword id="KW-0378">Hydrolase</keyword>
<keyword id="KW-0472">Membrane</keyword>
<keyword id="KW-0645">Protease</keyword>
<keyword id="KW-1185">Reference proteome</keyword>
<keyword id="KW-0812">Transmembrane</keyword>
<keyword id="KW-1133">Transmembrane helix</keyword>
<proteinExistence type="evidence at protein level"/>
<comment type="function">
    <text evidence="1">Aminopeptidase.</text>
</comment>
<comment type="subcellular location">
    <subcellularLocation>
        <location evidence="3">Cell membrane</location>
        <topology evidence="3">Multi-pass membrane protein</topology>
    </subcellularLocation>
</comment>
<comment type="similarity">
    <text evidence="3">Belongs to the peptidase S58 family.</text>
</comment>
<evidence type="ECO:0000250" key="1">
    <source>
        <dbReference type="UniProtKB" id="Q52VH2"/>
    </source>
</evidence>
<evidence type="ECO:0000255" key="2"/>
<evidence type="ECO:0000305" key="3"/>
<protein>
    <recommendedName>
        <fullName>Uncharacterized aminopeptidase Rv1333</fullName>
        <ecNumber evidence="1">3.4.11.-</ecNumber>
    </recommendedName>
</protein>
<sequence>MNSITDVGGIRVGHYQRLDPDASLGAGWACGVTVVLPPPGTVGAVDCRGGAPGTRETDLLDPANSVRFVDALLLAGGSAYGLAAADGVMRWLEEHRRGVAMDSGVVPIVPGAVIFDLPVGGWNCRPTADFGYSACAAAGVDVAVGTVGVGVGARAGALKGGVGTASATLQSGVTVGVLAVVNAAGNVVDPATGLPWMADLVGEFALRAPPAEQIAALAQLSSPLGAFNTPFNTTIGVIACDAALSPAACRRIAIAAHDGLARTIRPAHTPLDGDTVFALATGAVAVPPEAGVPAALSPETQLVTAVGAAAADCLARAVLAGVLNAQPVAGIPTYRDMFPGAFGS</sequence>
<reference key="1">
    <citation type="journal article" date="1998" name="Nature">
        <title>Deciphering the biology of Mycobacterium tuberculosis from the complete genome sequence.</title>
        <authorList>
            <person name="Cole S.T."/>
            <person name="Brosch R."/>
            <person name="Parkhill J."/>
            <person name="Garnier T."/>
            <person name="Churcher C.M."/>
            <person name="Harris D.E."/>
            <person name="Gordon S.V."/>
            <person name="Eiglmeier K."/>
            <person name="Gas S."/>
            <person name="Barry C.E. III"/>
            <person name="Tekaia F."/>
            <person name="Badcock K."/>
            <person name="Basham D."/>
            <person name="Brown D."/>
            <person name="Chillingworth T."/>
            <person name="Connor R."/>
            <person name="Davies R.M."/>
            <person name="Devlin K."/>
            <person name="Feltwell T."/>
            <person name="Gentles S."/>
            <person name="Hamlin N."/>
            <person name="Holroyd S."/>
            <person name="Hornsby T."/>
            <person name="Jagels K."/>
            <person name="Krogh A."/>
            <person name="McLean J."/>
            <person name="Moule S."/>
            <person name="Murphy L.D."/>
            <person name="Oliver S."/>
            <person name="Osborne J."/>
            <person name="Quail M.A."/>
            <person name="Rajandream M.A."/>
            <person name="Rogers J."/>
            <person name="Rutter S."/>
            <person name="Seeger K."/>
            <person name="Skelton S."/>
            <person name="Squares S."/>
            <person name="Squares R."/>
            <person name="Sulston J.E."/>
            <person name="Taylor K."/>
            <person name="Whitehead S."/>
            <person name="Barrell B.G."/>
        </authorList>
    </citation>
    <scope>NUCLEOTIDE SEQUENCE [LARGE SCALE GENOMIC DNA]</scope>
    <source>
        <strain>ATCC 25618 / H37Rv</strain>
    </source>
</reference>
<reference key="2">
    <citation type="journal article" date="2011" name="Mol. Cell. Proteomics">
        <title>Proteogenomic analysis of Mycobacterium tuberculosis by high resolution mass spectrometry.</title>
        <authorList>
            <person name="Kelkar D.S."/>
            <person name="Kumar D."/>
            <person name="Kumar P."/>
            <person name="Balakrishnan L."/>
            <person name="Muthusamy B."/>
            <person name="Yadav A.K."/>
            <person name="Shrivastava P."/>
            <person name="Marimuthu A."/>
            <person name="Anand S."/>
            <person name="Sundaram H."/>
            <person name="Kingsbury R."/>
            <person name="Harsha H.C."/>
            <person name="Nair B."/>
            <person name="Prasad T.S."/>
            <person name="Chauhan D.S."/>
            <person name="Katoch K."/>
            <person name="Katoch V.M."/>
            <person name="Kumar P."/>
            <person name="Chaerkady R."/>
            <person name="Ramachandran S."/>
            <person name="Dash D."/>
            <person name="Pandey A."/>
        </authorList>
    </citation>
    <scope>IDENTIFICATION BY MASS SPECTROMETRY [LARGE SCALE ANALYSIS]</scope>
    <source>
        <strain>ATCC 25618 / H37Rv</strain>
    </source>
</reference>
<gene>
    <name type="ordered locus">Rv1333</name>
    <name type="ORF">MTCY130.18</name>
</gene>
<accession>P9WM23</accession>
<accession>L0T6C1</accession>
<accession>P64811</accession>
<accession>Q10644</accession>
<organism>
    <name type="scientific">Mycobacterium tuberculosis (strain ATCC 25618 / H37Rv)</name>
    <dbReference type="NCBI Taxonomy" id="83332"/>
    <lineage>
        <taxon>Bacteria</taxon>
        <taxon>Bacillati</taxon>
        <taxon>Actinomycetota</taxon>
        <taxon>Actinomycetes</taxon>
        <taxon>Mycobacteriales</taxon>
        <taxon>Mycobacteriaceae</taxon>
        <taxon>Mycobacterium</taxon>
        <taxon>Mycobacterium tuberculosis complex</taxon>
    </lineage>
</organism>
<feature type="chain" id="PRO_0000103808" description="Uncharacterized aminopeptidase Rv1333">
    <location>
        <begin position="1"/>
        <end position="344"/>
    </location>
</feature>
<feature type="transmembrane region" description="Helical" evidence="2">
    <location>
        <begin position="25"/>
        <end position="45"/>
    </location>
</feature>
<feature type="transmembrane region" description="Helical" evidence="2">
    <location>
        <begin position="68"/>
        <end position="88"/>
    </location>
</feature>
<feature type="transmembrane region" description="Helical" evidence="2">
    <location>
        <begin position="104"/>
        <end position="124"/>
    </location>
</feature>
<feature type="transmembrane region" description="Helical" evidence="2">
    <location>
        <begin position="133"/>
        <end position="153"/>
    </location>
</feature>
<feature type="transmembrane region" description="Helical" evidence="2">
    <location>
        <begin position="161"/>
        <end position="181"/>
    </location>
</feature>
<feature type="transmembrane region" description="Helical" evidence="2">
    <location>
        <begin position="224"/>
        <end position="244"/>
    </location>
</feature>
<feature type="transmembrane region" description="Helical" evidence="2">
    <location>
        <begin position="276"/>
        <end position="296"/>
    </location>
</feature>
<feature type="transmembrane region" description="Helical" evidence="2">
    <location>
        <begin position="302"/>
        <end position="322"/>
    </location>
</feature>